<name>GCST_BACHK</name>
<evidence type="ECO:0000255" key="1">
    <source>
        <dbReference type="HAMAP-Rule" id="MF_00259"/>
    </source>
</evidence>
<organism>
    <name type="scientific">Bacillus thuringiensis subsp. konkukian (strain 97-27)</name>
    <dbReference type="NCBI Taxonomy" id="281309"/>
    <lineage>
        <taxon>Bacteria</taxon>
        <taxon>Bacillati</taxon>
        <taxon>Bacillota</taxon>
        <taxon>Bacilli</taxon>
        <taxon>Bacillales</taxon>
        <taxon>Bacillaceae</taxon>
        <taxon>Bacillus</taxon>
        <taxon>Bacillus cereus group</taxon>
    </lineage>
</organism>
<dbReference type="EC" id="2.1.2.10" evidence="1"/>
<dbReference type="EMBL" id="AE017355">
    <property type="protein sequence ID" value="AAT60790.1"/>
    <property type="molecule type" value="Genomic_DNA"/>
</dbReference>
<dbReference type="RefSeq" id="WP_000631769.1">
    <property type="nucleotide sequence ID" value="NC_005957.1"/>
</dbReference>
<dbReference type="RefSeq" id="YP_038290.1">
    <property type="nucleotide sequence ID" value="NC_005957.1"/>
</dbReference>
<dbReference type="SMR" id="Q6HDT6"/>
<dbReference type="GeneID" id="72450912"/>
<dbReference type="KEGG" id="btk:BT9727_3971"/>
<dbReference type="PATRIC" id="fig|281309.8.peg.4234"/>
<dbReference type="HOGENOM" id="CLU_007884_10_2_9"/>
<dbReference type="Proteomes" id="UP000001301">
    <property type="component" value="Chromosome"/>
</dbReference>
<dbReference type="GO" id="GO:0005829">
    <property type="term" value="C:cytosol"/>
    <property type="evidence" value="ECO:0007669"/>
    <property type="project" value="TreeGrafter"/>
</dbReference>
<dbReference type="GO" id="GO:0005960">
    <property type="term" value="C:glycine cleavage complex"/>
    <property type="evidence" value="ECO:0007669"/>
    <property type="project" value="InterPro"/>
</dbReference>
<dbReference type="GO" id="GO:0004047">
    <property type="term" value="F:aminomethyltransferase activity"/>
    <property type="evidence" value="ECO:0007669"/>
    <property type="project" value="UniProtKB-UniRule"/>
</dbReference>
<dbReference type="GO" id="GO:0008483">
    <property type="term" value="F:transaminase activity"/>
    <property type="evidence" value="ECO:0007669"/>
    <property type="project" value="UniProtKB-KW"/>
</dbReference>
<dbReference type="GO" id="GO:0019464">
    <property type="term" value="P:glycine decarboxylation via glycine cleavage system"/>
    <property type="evidence" value="ECO:0007669"/>
    <property type="project" value="UniProtKB-UniRule"/>
</dbReference>
<dbReference type="FunFam" id="2.40.30.110:FF:000003">
    <property type="entry name" value="Aminomethyltransferase"/>
    <property type="match status" value="1"/>
</dbReference>
<dbReference type="FunFam" id="3.30.70.1400:FF:000001">
    <property type="entry name" value="Aminomethyltransferase"/>
    <property type="match status" value="1"/>
</dbReference>
<dbReference type="FunFam" id="4.10.1250.10:FF:000001">
    <property type="entry name" value="Aminomethyltransferase"/>
    <property type="match status" value="1"/>
</dbReference>
<dbReference type="Gene3D" id="2.40.30.110">
    <property type="entry name" value="Aminomethyltransferase beta-barrel domains"/>
    <property type="match status" value="1"/>
</dbReference>
<dbReference type="Gene3D" id="3.30.70.1400">
    <property type="entry name" value="Aminomethyltransferase beta-barrel domains"/>
    <property type="match status" value="1"/>
</dbReference>
<dbReference type="Gene3D" id="4.10.1250.10">
    <property type="entry name" value="Aminomethyltransferase fragment"/>
    <property type="match status" value="1"/>
</dbReference>
<dbReference type="Gene3D" id="3.30.1360.120">
    <property type="entry name" value="Probable tRNA modification gtpase trme, domain 1"/>
    <property type="match status" value="1"/>
</dbReference>
<dbReference type="HAMAP" id="MF_00259">
    <property type="entry name" value="GcvT"/>
    <property type="match status" value="1"/>
</dbReference>
<dbReference type="InterPro" id="IPR006223">
    <property type="entry name" value="GCS_T"/>
</dbReference>
<dbReference type="InterPro" id="IPR022903">
    <property type="entry name" value="GCS_T_bac"/>
</dbReference>
<dbReference type="InterPro" id="IPR013977">
    <property type="entry name" value="GCST_C"/>
</dbReference>
<dbReference type="InterPro" id="IPR006222">
    <property type="entry name" value="GCV_T_N"/>
</dbReference>
<dbReference type="InterPro" id="IPR028896">
    <property type="entry name" value="GcvT/YgfZ/DmdA"/>
</dbReference>
<dbReference type="InterPro" id="IPR029043">
    <property type="entry name" value="GcvT/YgfZ_C"/>
</dbReference>
<dbReference type="InterPro" id="IPR027266">
    <property type="entry name" value="TrmE/GcvT_dom1"/>
</dbReference>
<dbReference type="NCBIfam" id="TIGR00528">
    <property type="entry name" value="gcvT"/>
    <property type="match status" value="1"/>
</dbReference>
<dbReference type="NCBIfam" id="NF001567">
    <property type="entry name" value="PRK00389.1"/>
    <property type="match status" value="1"/>
</dbReference>
<dbReference type="PANTHER" id="PTHR43757">
    <property type="entry name" value="AMINOMETHYLTRANSFERASE"/>
    <property type="match status" value="1"/>
</dbReference>
<dbReference type="PANTHER" id="PTHR43757:SF2">
    <property type="entry name" value="AMINOMETHYLTRANSFERASE, MITOCHONDRIAL"/>
    <property type="match status" value="1"/>
</dbReference>
<dbReference type="Pfam" id="PF01571">
    <property type="entry name" value="GCV_T"/>
    <property type="match status" value="1"/>
</dbReference>
<dbReference type="Pfam" id="PF08669">
    <property type="entry name" value="GCV_T_C"/>
    <property type="match status" value="1"/>
</dbReference>
<dbReference type="PIRSF" id="PIRSF006487">
    <property type="entry name" value="GcvT"/>
    <property type="match status" value="1"/>
</dbReference>
<dbReference type="SUPFAM" id="SSF101790">
    <property type="entry name" value="Aminomethyltransferase beta-barrel domain"/>
    <property type="match status" value="1"/>
</dbReference>
<dbReference type="SUPFAM" id="SSF103025">
    <property type="entry name" value="Folate-binding domain"/>
    <property type="match status" value="1"/>
</dbReference>
<reference key="1">
    <citation type="journal article" date="2006" name="J. Bacteriol.">
        <title>Pathogenomic sequence analysis of Bacillus cereus and Bacillus thuringiensis isolates closely related to Bacillus anthracis.</title>
        <authorList>
            <person name="Han C.S."/>
            <person name="Xie G."/>
            <person name="Challacombe J.F."/>
            <person name="Altherr M.R."/>
            <person name="Bhotika S.S."/>
            <person name="Bruce D."/>
            <person name="Campbell C.S."/>
            <person name="Campbell M.L."/>
            <person name="Chen J."/>
            <person name="Chertkov O."/>
            <person name="Cleland C."/>
            <person name="Dimitrijevic M."/>
            <person name="Doggett N.A."/>
            <person name="Fawcett J.J."/>
            <person name="Glavina T."/>
            <person name="Goodwin L.A."/>
            <person name="Hill K.K."/>
            <person name="Hitchcock P."/>
            <person name="Jackson P.J."/>
            <person name="Keim P."/>
            <person name="Kewalramani A.R."/>
            <person name="Longmire J."/>
            <person name="Lucas S."/>
            <person name="Malfatti S."/>
            <person name="McMurry K."/>
            <person name="Meincke L.J."/>
            <person name="Misra M."/>
            <person name="Moseman B.L."/>
            <person name="Mundt M."/>
            <person name="Munk A.C."/>
            <person name="Okinaka R.T."/>
            <person name="Parson-Quintana B."/>
            <person name="Reilly L.P."/>
            <person name="Richardson P."/>
            <person name="Robinson D.L."/>
            <person name="Rubin E."/>
            <person name="Saunders E."/>
            <person name="Tapia R."/>
            <person name="Tesmer J.G."/>
            <person name="Thayer N."/>
            <person name="Thompson L.S."/>
            <person name="Tice H."/>
            <person name="Ticknor L.O."/>
            <person name="Wills P.L."/>
            <person name="Brettin T.S."/>
            <person name="Gilna P."/>
        </authorList>
    </citation>
    <scope>NUCLEOTIDE SEQUENCE [LARGE SCALE GENOMIC DNA]</scope>
    <source>
        <strain>97-27</strain>
    </source>
</reference>
<comment type="function">
    <text evidence="1">The glycine cleavage system catalyzes the degradation of glycine.</text>
</comment>
<comment type="catalytic activity">
    <reaction evidence="1">
        <text>N(6)-[(R)-S(8)-aminomethyldihydrolipoyl]-L-lysyl-[protein] + (6S)-5,6,7,8-tetrahydrofolate = N(6)-[(R)-dihydrolipoyl]-L-lysyl-[protein] + (6R)-5,10-methylene-5,6,7,8-tetrahydrofolate + NH4(+)</text>
        <dbReference type="Rhea" id="RHEA:16945"/>
        <dbReference type="Rhea" id="RHEA-COMP:10475"/>
        <dbReference type="Rhea" id="RHEA-COMP:10492"/>
        <dbReference type="ChEBI" id="CHEBI:15636"/>
        <dbReference type="ChEBI" id="CHEBI:28938"/>
        <dbReference type="ChEBI" id="CHEBI:57453"/>
        <dbReference type="ChEBI" id="CHEBI:83100"/>
        <dbReference type="ChEBI" id="CHEBI:83143"/>
        <dbReference type="EC" id="2.1.2.10"/>
    </reaction>
</comment>
<comment type="subunit">
    <text evidence="1">The glycine cleavage system is composed of four proteins: P, T, L and H.</text>
</comment>
<comment type="similarity">
    <text evidence="1">Belongs to the GcvT family.</text>
</comment>
<feature type="chain" id="PRO_0000122541" description="Aminomethyltransferase">
    <location>
        <begin position="1"/>
        <end position="366"/>
    </location>
</feature>
<gene>
    <name evidence="1" type="primary">gcvT</name>
    <name type="ordered locus">BT9727_3971</name>
</gene>
<sequence length="366" mass="40225">MITLQRTPLFDVYAKYGGKTIDFGGWELPVQFSSIKEEHEAVRTAAGLFDVSHMGEVEVKGVDSLAFLQRVVTNDVSTLKVGGAQYTAMCYENGGTVDDLLIYKRGEEDYLLVINASNIEKDYEWLASHVIGDATVVNVSSEVAQLAIQGPKAEGILQKVVSEDLKEIKFFKFKNDILVDGIPALVSRTGYTGEDGFEIYCKSEDAAKLWEKLLEVGAEEGLKACGLGARDTLRFEATLPLYGQELSKDITPIEAGIGFAVKTNKEADFFGKATLKEQKENGAPRKLVGIEVIERGIPRTHYPVFIGEEKIGEVTSGTQSPTLKKSIGLALIDVKYAAVDTEVEIEIRNKRVKAVVVPTPFYKRSK</sequence>
<keyword id="KW-0032">Aminotransferase</keyword>
<keyword id="KW-0808">Transferase</keyword>
<proteinExistence type="inferred from homology"/>
<protein>
    <recommendedName>
        <fullName evidence="1">Aminomethyltransferase</fullName>
        <ecNumber evidence="1">2.1.2.10</ecNumber>
    </recommendedName>
    <alternativeName>
        <fullName evidence="1">Glycine cleavage system T protein</fullName>
    </alternativeName>
</protein>
<accession>Q6HDT6</accession>